<organism>
    <name type="scientific">Emericella nidulans (strain FGSC A4 / ATCC 38163 / CBS 112.46 / NRRL 194 / M139)</name>
    <name type="common">Aspergillus nidulans</name>
    <dbReference type="NCBI Taxonomy" id="227321"/>
    <lineage>
        <taxon>Eukaryota</taxon>
        <taxon>Fungi</taxon>
        <taxon>Dikarya</taxon>
        <taxon>Ascomycota</taxon>
        <taxon>Pezizomycotina</taxon>
        <taxon>Eurotiomycetes</taxon>
        <taxon>Eurotiomycetidae</taxon>
        <taxon>Eurotiales</taxon>
        <taxon>Aspergillaceae</taxon>
        <taxon>Aspergillus</taxon>
        <taxon>Aspergillus subgen. Nidulantes</taxon>
    </lineage>
</organism>
<proteinExistence type="inferred from homology"/>
<reference key="1">
    <citation type="journal article" date="2005" name="Nature">
        <title>Sequencing of Aspergillus nidulans and comparative analysis with A. fumigatus and A. oryzae.</title>
        <authorList>
            <person name="Galagan J.E."/>
            <person name="Calvo S.E."/>
            <person name="Cuomo C."/>
            <person name="Ma L.-J."/>
            <person name="Wortman J.R."/>
            <person name="Batzoglou S."/>
            <person name="Lee S.-I."/>
            <person name="Bastuerkmen M."/>
            <person name="Spevak C.C."/>
            <person name="Clutterbuck J."/>
            <person name="Kapitonov V."/>
            <person name="Jurka J."/>
            <person name="Scazzocchio C."/>
            <person name="Farman M.L."/>
            <person name="Butler J."/>
            <person name="Purcell S."/>
            <person name="Harris S."/>
            <person name="Braus G.H."/>
            <person name="Draht O."/>
            <person name="Busch S."/>
            <person name="D'Enfert C."/>
            <person name="Bouchier C."/>
            <person name="Goldman G.H."/>
            <person name="Bell-Pedersen D."/>
            <person name="Griffiths-Jones S."/>
            <person name="Doonan J.H."/>
            <person name="Yu J."/>
            <person name="Vienken K."/>
            <person name="Pain A."/>
            <person name="Freitag M."/>
            <person name="Selker E.U."/>
            <person name="Archer D.B."/>
            <person name="Penalva M.A."/>
            <person name="Oakley B.R."/>
            <person name="Momany M."/>
            <person name="Tanaka T."/>
            <person name="Kumagai T."/>
            <person name="Asai K."/>
            <person name="Machida M."/>
            <person name="Nierman W.C."/>
            <person name="Denning D.W."/>
            <person name="Caddick M.X."/>
            <person name="Hynes M."/>
            <person name="Paoletti M."/>
            <person name="Fischer R."/>
            <person name="Miller B.L."/>
            <person name="Dyer P.S."/>
            <person name="Sachs M.S."/>
            <person name="Osmani S.A."/>
            <person name="Birren B.W."/>
        </authorList>
    </citation>
    <scope>NUCLEOTIDE SEQUENCE [LARGE SCALE GENOMIC DNA]</scope>
    <source>
        <strain>FGSC A4 / ATCC 38163 / CBS 112.46 / NRRL 194 / M139</strain>
    </source>
</reference>
<reference key="2">
    <citation type="journal article" date="2009" name="Fungal Genet. Biol.">
        <title>The 2008 update of the Aspergillus nidulans genome annotation: a community effort.</title>
        <authorList>
            <person name="Wortman J.R."/>
            <person name="Gilsenan J.M."/>
            <person name="Joardar V."/>
            <person name="Deegan J."/>
            <person name="Clutterbuck J."/>
            <person name="Andersen M.R."/>
            <person name="Archer D."/>
            <person name="Bencina M."/>
            <person name="Braus G."/>
            <person name="Coutinho P."/>
            <person name="von Dohren H."/>
            <person name="Doonan J."/>
            <person name="Driessen A.J."/>
            <person name="Durek P."/>
            <person name="Espeso E."/>
            <person name="Fekete E."/>
            <person name="Flipphi M."/>
            <person name="Estrada C.G."/>
            <person name="Geysens S."/>
            <person name="Goldman G."/>
            <person name="de Groot P.W."/>
            <person name="Hansen K."/>
            <person name="Harris S.D."/>
            <person name="Heinekamp T."/>
            <person name="Helmstaedt K."/>
            <person name="Henrissat B."/>
            <person name="Hofmann G."/>
            <person name="Homan T."/>
            <person name="Horio T."/>
            <person name="Horiuchi H."/>
            <person name="James S."/>
            <person name="Jones M."/>
            <person name="Karaffa L."/>
            <person name="Karanyi Z."/>
            <person name="Kato M."/>
            <person name="Keller N."/>
            <person name="Kelly D.E."/>
            <person name="Kiel J.A."/>
            <person name="Kim J.M."/>
            <person name="van der Klei I.J."/>
            <person name="Klis F.M."/>
            <person name="Kovalchuk A."/>
            <person name="Krasevec N."/>
            <person name="Kubicek C.P."/>
            <person name="Liu B."/>
            <person name="Maccabe A."/>
            <person name="Meyer V."/>
            <person name="Mirabito P."/>
            <person name="Miskei M."/>
            <person name="Mos M."/>
            <person name="Mullins J."/>
            <person name="Nelson D.R."/>
            <person name="Nielsen J."/>
            <person name="Oakley B.R."/>
            <person name="Osmani S.A."/>
            <person name="Pakula T."/>
            <person name="Paszewski A."/>
            <person name="Paulsen I."/>
            <person name="Pilsyk S."/>
            <person name="Pocsi I."/>
            <person name="Punt P.J."/>
            <person name="Ram A.F."/>
            <person name="Ren Q."/>
            <person name="Robellet X."/>
            <person name="Robson G."/>
            <person name="Seiboth B."/>
            <person name="van Solingen P."/>
            <person name="Specht T."/>
            <person name="Sun J."/>
            <person name="Taheri-Talesh N."/>
            <person name="Takeshita N."/>
            <person name="Ussery D."/>
            <person name="vanKuyk P.A."/>
            <person name="Visser H."/>
            <person name="van de Vondervoort P.J."/>
            <person name="de Vries R.P."/>
            <person name="Walton J."/>
            <person name="Xiang X."/>
            <person name="Xiong Y."/>
            <person name="Zeng A.P."/>
            <person name="Brandt B.W."/>
            <person name="Cornell M.J."/>
            <person name="van den Hondel C.A."/>
            <person name="Visser J."/>
            <person name="Oliver S.G."/>
            <person name="Turner G."/>
        </authorList>
    </citation>
    <scope>GENOME REANNOTATION</scope>
    <source>
        <strain>FGSC A4 / ATCC 38163 / CBS 112.46 / NRRL 194 / M139</strain>
    </source>
</reference>
<feature type="chain" id="PRO_0000213812" description="Sorting nexin-4">
    <location>
        <begin position="1"/>
        <end position="487"/>
    </location>
</feature>
<feature type="domain" description="PX" evidence="6">
    <location>
        <begin position="70"/>
        <end position="192"/>
    </location>
</feature>
<feature type="region of interest" description="Disordered" evidence="7">
    <location>
        <begin position="1"/>
        <end position="59"/>
    </location>
</feature>
<feature type="coiled-coil region" evidence="5">
    <location>
        <begin position="395"/>
        <end position="430"/>
    </location>
</feature>
<feature type="compositionally biased region" description="Polar residues" evidence="7">
    <location>
        <begin position="20"/>
        <end position="32"/>
    </location>
</feature>
<feature type="binding site" evidence="2">
    <location>
        <position position="113"/>
    </location>
    <ligand>
        <name>a 1,2-diacyl-sn-glycero-3-phospho-(1D-myo-inositol-3-phosphate)</name>
        <dbReference type="ChEBI" id="CHEBI:58088"/>
    </ligand>
</feature>
<feature type="binding site" evidence="2">
    <location>
        <position position="115"/>
    </location>
    <ligand>
        <name>a 1,2-diacyl-sn-glycero-3-phospho-(1D-myo-inositol-3-phosphate)</name>
        <dbReference type="ChEBI" id="CHEBI:58088"/>
    </ligand>
</feature>
<feature type="binding site" evidence="4">
    <location>
        <position position="139"/>
    </location>
    <ligand>
        <name>a 1,2-diacyl-sn-glycero-3-phospho-(1D-myo-inositol-3-phosphate)</name>
        <dbReference type="ChEBI" id="CHEBI:58088"/>
    </ligand>
</feature>
<feature type="binding site" evidence="3">
    <location>
        <position position="158"/>
    </location>
    <ligand>
        <name>a 1,2-diacyl-sn-glycero-3-phospho-(1D-myo-inositol-3-phosphate)</name>
        <dbReference type="ChEBI" id="CHEBI:58088"/>
    </ligand>
</feature>
<comment type="function">
    <text evidence="1">Sorting nexin, involved in the separation or division of vacuoles throughout the entire life cycle of the cells. Involved in retrieval of late-Golgi SNAREs from post-Golgi endosomes to the trans-Golgi network, for cytoplasm to vacuole transport (Cvt), and autophagy of large cargos including mitophagy, pexophagy and glycophagy.</text>
</comment>
<comment type="subcellular location">
    <subcellularLocation>
        <location evidence="1">Cytoplasm</location>
        <location evidence="1">Cytosol</location>
    </subcellularLocation>
    <subcellularLocation>
        <location evidence="1">Preautophagosomal structure membrane</location>
        <topology evidence="1">Peripheral membrane protein</topology>
    </subcellularLocation>
    <subcellularLocation>
        <location evidence="1">Endosome membrane</location>
        <topology evidence="1">Peripheral membrane protein</topology>
    </subcellularLocation>
    <text evidence="1">Endosome and other perivacuolar punctate structures. Associates to phosphatidylinositol 3-phosphate, necessary for peripheral membrane localization to the perivacuolar punctate structures.</text>
</comment>
<comment type="domain">
    <text evidence="4">The PX domain binds phosphatidylinositol 3-phosphate which is necessary for peripheral membrane localization to the perivacuolar punctate structures.</text>
</comment>
<comment type="similarity">
    <text evidence="8">Belongs to the sorting nexin family.</text>
</comment>
<sequence length="487" mass="55714">MDHDDFDSVSWRHGPDSDISRPTTSGTDTAESPETRRDPNGKRRMSSASEIPQAGPHADALDLAGIGDGVLECRVDTPIKENDGTKDAYISYLVTTHTDFKSFQKADFTVRRRFTDFVFLYKTLYREYPACAVPPLPDKHKMEYVRGDRFGAEFTTRRAWSLHRFLKRLTLHPVLRRAPLLAIFLESPDWNAHMRLRGSRASTSGSDGGGTGIFDNFTDTFVNAFTKVHKPDRRFIEVREKADKLDEDLTHVEKIVARVARREADLETDYNDLATQFRKLVPLEPEVEVPLQVFAASVEETARGIKNLKDHTDQNYLGSLRDMEAYILSVKSLLKTREQKQLDFEALVDYRNKAVAERDSLAANPSSYYASNPLTSSPASFIRSKMEDMRGVDHEQSRRERMRKLELRIDELTREVESAKTTSEMFDEEVVREVADFERIKAIEFRDSLGALAEQHIEFYQGVLNTWERFVAEMEEEQSTGDAHPNA</sequence>
<name>SNX4_EMENI</name>
<gene>
    <name type="primary">snx4</name>
    <name type="synonym">atg24</name>
    <name type="ORF">AN3584</name>
</gene>
<keyword id="KW-0072">Autophagy</keyword>
<keyword id="KW-0175">Coiled coil</keyword>
<keyword id="KW-0963">Cytoplasm</keyword>
<keyword id="KW-0967">Endosome</keyword>
<keyword id="KW-0446">Lipid-binding</keyword>
<keyword id="KW-0472">Membrane</keyword>
<keyword id="KW-0653">Protein transport</keyword>
<keyword id="KW-1185">Reference proteome</keyword>
<keyword id="KW-0813">Transport</keyword>
<accession>Q5B797</accession>
<accession>C8V4E5</accession>
<protein>
    <recommendedName>
        <fullName>Sorting nexin-4</fullName>
    </recommendedName>
    <alternativeName>
        <fullName>Autophagy-related protein 24</fullName>
    </alternativeName>
</protein>
<dbReference type="EMBL" id="AACD01000061">
    <property type="protein sequence ID" value="EAA59792.1"/>
    <property type="molecule type" value="Genomic_DNA"/>
</dbReference>
<dbReference type="EMBL" id="BN001302">
    <property type="protein sequence ID" value="CBF75835.1"/>
    <property type="molecule type" value="Genomic_DNA"/>
</dbReference>
<dbReference type="RefSeq" id="XP_661188.1">
    <property type="nucleotide sequence ID" value="XM_656096.1"/>
</dbReference>
<dbReference type="SMR" id="Q5B797"/>
<dbReference type="FunCoup" id="Q5B797">
    <property type="interactions" value="474"/>
</dbReference>
<dbReference type="STRING" id="227321.Q5B797"/>
<dbReference type="EnsemblFungi" id="CBF75835">
    <property type="protein sequence ID" value="CBF75835"/>
    <property type="gene ID" value="ANIA_03584"/>
</dbReference>
<dbReference type="KEGG" id="ani:ANIA_03584"/>
<dbReference type="VEuPathDB" id="FungiDB:AN3584"/>
<dbReference type="eggNOG" id="KOG2273">
    <property type="taxonomic scope" value="Eukaryota"/>
</dbReference>
<dbReference type="HOGENOM" id="CLU_027221_2_0_1"/>
<dbReference type="InParanoid" id="Q5B797"/>
<dbReference type="OMA" id="WSLHRFI"/>
<dbReference type="OrthoDB" id="205639at2759"/>
<dbReference type="Proteomes" id="UP000000560">
    <property type="component" value="Chromosome II"/>
</dbReference>
<dbReference type="GO" id="GO:0005829">
    <property type="term" value="C:cytosol"/>
    <property type="evidence" value="ECO:0007669"/>
    <property type="project" value="UniProtKB-SubCell"/>
</dbReference>
<dbReference type="GO" id="GO:0005769">
    <property type="term" value="C:early endosome"/>
    <property type="evidence" value="ECO:0000318"/>
    <property type="project" value="GO_Central"/>
</dbReference>
<dbReference type="GO" id="GO:0010008">
    <property type="term" value="C:endosome membrane"/>
    <property type="evidence" value="ECO:0007669"/>
    <property type="project" value="UniProtKB-SubCell"/>
</dbReference>
<dbReference type="GO" id="GO:0000407">
    <property type="term" value="C:phagophore assembly site"/>
    <property type="evidence" value="ECO:0000318"/>
    <property type="project" value="GO_Central"/>
</dbReference>
<dbReference type="GO" id="GO:0034045">
    <property type="term" value="C:phagophore assembly site membrane"/>
    <property type="evidence" value="ECO:0007669"/>
    <property type="project" value="UniProtKB-SubCell"/>
</dbReference>
<dbReference type="GO" id="GO:0035091">
    <property type="term" value="F:phosphatidylinositol binding"/>
    <property type="evidence" value="ECO:0007669"/>
    <property type="project" value="InterPro"/>
</dbReference>
<dbReference type="GO" id="GO:0032456">
    <property type="term" value="P:endocytic recycling"/>
    <property type="evidence" value="ECO:0000318"/>
    <property type="project" value="GO_Central"/>
</dbReference>
<dbReference type="GO" id="GO:0000423">
    <property type="term" value="P:mitophagy"/>
    <property type="evidence" value="ECO:0000318"/>
    <property type="project" value="GO_Central"/>
</dbReference>
<dbReference type="GO" id="GO:0034727">
    <property type="term" value="P:piecemeal microautophagy of the nucleus"/>
    <property type="evidence" value="ECO:0000318"/>
    <property type="project" value="GO_Central"/>
</dbReference>
<dbReference type="GO" id="GO:0015031">
    <property type="term" value="P:protein transport"/>
    <property type="evidence" value="ECO:0000318"/>
    <property type="project" value="GO_Central"/>
</dbReference>
<dbReference type="GO" id="GO:0061709">
    <property type="term" value="P:reticulophagy"/>
    <property type="evidence" value="ECO:0000318"/>
    <property type="project" value="GO_Central"/>
</dbReference>
<dbReference type="CDD" id="cd07628">
    <property type="entry name" value="BAR_Atg24p"/>
    <property type="match status" value="1"/>
</dbReference>
<dbReference type="CDD" id="cd06863">
    <property type="entry name" value="PX_Atg24p"/>
    <property type="match status" value="1"/>
</dbReference>
<dbReference type="FunFam" id="3.30.1520.10:FF:000035">
    <property type="entry name" value="Sorting nexin-4 protein"/>
    <property type="match status" value="1"/>
</dbReference>
<dbReference type="FunFam" id="1.20.1270.60:FF:000042">
    <property type="entry name" value="Vacuolar targeting protein Atg24"/>
    <property type="match status" value="1"/>
</dbReference>
<dbReference type="Gene3D" id="1.20.1270.60">
    <property type="entry name" value="Arfaptin homology (AH) domain/BAR domain"/>
    <property type="match status" value="1"/>
</dbReference>
<dbReference type="Gene3D" id="3.30.1520.10">
    <property type="entry name" value="Phox-like domain"/>
    <property type="match status" value="1"/>
</dbReference>
<dbReference type="InterPro" id="IPR027267">
    <property type="entry name" value="AH/BAR_dom_sf"/>
</dbReference>
<dbReference type="InterPro" id="IPR001683">
    <property type="entry name" value="PX_dom"/>
</dbReference>
<dbReference type="InterPro" id="IPR036871">
    <property type="entry name" value="PX_dom_sf"/>
</dbReference>
<dbReference type="InterPro" id="IPR015404">
    <property type="entry name" value="Vps5_C"/>
</dbReference>
<dbReference type="PANTHER" id="PTHR45949">
    <property type="entry name" value="SORTING NEXIN-4"/>
    <property type="match status" value="1"/>
</dbReference>
<dbReference type="PANTHER" id="PTHR45949:SF2">
    <property type="entry name" value="SORTING NEXIN-4"/>
    <property type="match status" value="1"/>
</dbReference>
<dbReference type="Pfam" id="PF00787">
    <property type="entry name" value="PX"/>
    <property type="match status" value="1"/>
</dbReference>
<dbReference type="Pfam" id="PF09325">
    <property type="entry name" value="Vps5"/>
    <property type="match status" value="2"/>
</dbReference>
<dbReference type="SMART" id="SM00312">
    <property type="entry name" value="PX"/>
    <property type="match status" value="1"/>
</dbReference>
<dbReference type="SUPFAM" id="SSF103657">
    <property type="entry name" value="BAR/IMD domain-like"/>
    <property type="match status" value="1"/>
</dbReference>
<dbReference type="SUPFAM" id="SSF64268">
    <property type="entry name" value="PX domain"/>
    <property type="match status" value="1"/>
</dbReference>
<dbReference type="PROSITE" id="PS50195">
    <property type="entry name" value="PX"/>
    <property type="match status" value="1"/>
</dbReference>
<evidence type="ECO:0000250" key="1">
    <source>
        <dbReference type="UniProtKB" id="P47057"/>
    </source>
</evidence>
<evidence type="ECO:0000250" key="2">
    <source>
        <dbReference type="UniProtKB" id="Q3UR97"/>
    </source>
</evidence>
<evidence type="ECO:0000250" key="3">
    <source>
        <dbReference type="UniProtKB" id="Q6P4T1"/>
    </source>
</evidence>
<evidence type="ECO:0000250" key="4">
    <source>
        <dbReference type="UniProtKB" id="Q96L94"/>
    </source>
</evidence>
<evidence type="ECO:0000255" key="5"/>
<evidence type="ECO:0000255" key="6">
    <source>
        <dbReference type="PROSITE-ProRule" id="PRU00147"/>
    </source>
</evidence>
<evidence type="ECO:0000256" key="7">
    <source>
        <dbReference type="SAM" id="MobiDB-lite"/>
    </source>
</evidence>
<evidence type="ECO:0000305" key="8"/>